<gene>
    <name evidence="1" type="primary">hcp</name>
    <name type="ordered locus">Tola_0504</name>
</gene>
<protein>
    <recommendedName>
        <fullName evidence="1">Hydroxylamine reductase</fullName>
        <ecNumber evidence="1">1.7.99.1</ecNumber>
    </recommendedName>
    <alternativeName>
        <fullName evidence="1">Hybrid-cluster protein</fullName>
        <shortName evidence="1">HCP</shortName>
    </alternativeName>
    <alternativeName>
        <fullName evidence="1">Prismane protein</fullName>
    </alternativeName>
</protein>
<name>HCP_TOLAT</name>
<accession>C4LA04</accession>
<feature type="chain" id="PRO_1000202440" description="Hydroxylamine reductase">
    <location>
        <begin position="1"/>
        <end position="553"/>
    </location>
</feature>
<feature type="binding site" evidence="1">
    <location>
        <position position="3"/>
    </location>
    <ligand>
        <name>[2Fe-2S] cluster</name>
        <dbReference type="ChEBI" id="CHEBI:190135"/>
    </ligand>
</feature>
<feature type="binding site" evidence="1">
    <location>
        <position position="6"/>
    </location>
    <ligand>
        <name>[2Fe-2S] cluster</name>
        <dbReference type="ChEBI" id="CHEBI:190135"/>
    </ligand>
</feature>
<feature type="binding site" evidence="1">
    <location>
        <position position="18"/>
    </location>
    <ligand>
        <name>[2Fe-2S] cluster</name>
        <dbReference type="ChEBI" id="CHEBI:190135"/>
    </ligand>
</feature>
<feature type="binding site" evidence="1">
    <location>
        <position position="25"/>
    </location>
    <ligand>
        <name>[2Fe-2S] cluster</name>
        <dbReference type="ChEBI" id="CHEBI:190135"/>
    </ligand>
</feature>
<feature type="binding site" evidence="1">
    <location>
        <position position="252"/>
    </location>
    <ligand>
        <name>hybrid [4Fe-2O-2S] cluster</name>
        <dbReference type="ChEBI" id="CHEBI:60519"/>
    </ligand>
</feature>
<feature type="binding site" evidence="1">
    <location>
        <position position="276"/>
    </location>
    <ligand>
        <name>hybrid [4Fe-2O-2S] cluster</name>
        <dbReference type="ChEBI" id="CHEBI:60519"/>
    </ligand>
</feature>
<feature type="binding site" evidence="1">
    <location>
        <position position="320"/>
    </location>
    <ligand>
        <name>hybrid [4Fe-2O-2S] cluster</name>
        <dbReference type="ChEBI" id="CHEBI:60519"/>
    </ligand>
</feature>
<feature type="binding site" description="via persulfide group" evidence="1">
    <location>
        <position position="408"/>
    </location>
    <ligand>
        <name>hybrid [4Fe-2O-2S] cluster</name>
        <dbReference type="ChEBI" id="CHEBI:60519"/>
    </ligand>
</feature>
<feature type="binding site" evidence="1">
    <location>
        <position position="436"/>
    </location>
    <ligand>
        <name>hybrid [4Fe-2O-2S] cluster</name>
        <dbReference type="ChEBI" id="CHEBI:60519"/>
    </ligand>
</feature>
<feature type="binding site" evidence="1">
    <location>
        <position position="461"/>
    </location>
    <ligand>
        <name>hybrid [4Fe-2O-2S] cluster</name>
        <dbReference type="ChEBI" id="CHEBI:60519"/>
    </ligand>
</feature>
<feature type="binding site" evidence="1">
    <location>
        <position position="495"/>
    </location>
    <ligand>
        <name>hybrid [4Fe-2O-2S] cluster</name>
        <dbReference type="ChEBI" id="CHEBI:60519"/>
    </ligand>
</feature>
<feature type="binding site" evidence="1">
    <location>
        <position position="497"/>
    </location>
    <ligand>
        <name>hybrid [4Fe-2O-2S] cluster</name>
        <dbReference type="ChEBI" id="CHEBI:60519"/>
    </ligand>
</feature>
<feature type="modified residue" description="Cysteine persulfide" evidence="1">
    <location>
        <position position="408"/>
    </location>
</feature>
<proteinExistence type="inferred from homology"/>
<evidence type="ECO:0000255" key="1">
    <source>
        <dbReference type="HAMAP-Rule" id="MF_00069"/>
    </source>
</evidence>
<keyword id="KW-0001">2Fe-2S</keyword>
<keyword id="KW-0963">Cytoplasm</keyword>
<keyword id="KW-0408">Iron</keyword>
<keyword id="KW-0411">Iron-sulfur</keyword>
<keyword id="KW-0479">Metal-binding</keyword>
<keyword id="KW-0560">Oxidoreductase</keyword>
<keyword id="KW-1185">Reference proteome</keyword>
<dbReference type="EC" id="1.7.99.1" evidence="1"/>
<dbReference type="EMBL" id="CP001616">
    <property type="protein sequence ID" value="ACQ92133.1"/>
    <property type="molecule type" value="Genomic_DNA"/>
</dbReference>
<dbReference type="RefSeq" id="WP_012728732.1">
    <property type="nucleotide sequence ID" value="NC_012691.1"/>
</dbReference>
<dbReference type="SMR" id="C4LA04"/>
<dbReference type="STRING" id="595494.Tola_0504"/>
<dbReference type="KEGG" id="tau:Tola_0504"/>
<dbReference type="eggNOG" id="COG1151">
    <property type="taxonomic scope" value="Bacteria"/>
</dbReference>
<dbReference type="HOGENOM" id="CLU_038344_2_0_6"/>
<dbReference type="OrthoDB" id="9761526at2"/>
<dbReference type="Proteomes" id="UP000009073">
    <property type="component" value="Chromosome"/>
</dbReference>
<dbReference type="GO" id="GO:0005737">
    <property type="term" value="C:cytoplasm"/>
    <property type="evidence" value="ECO:0007669"/>
    <property type="project" value="UniProtKB-SubCell"/>
</dbReference>
<dbReference type="GO" id="GO:0051537">
    <property type="term" value="F:2 iron, 2 sulfur cluster binding"/>
    <property type="evidence" value="ECO:0007669"/>
    <property type="project" value="UniProtKB-KW"/>
</dbReference>
<dbReference type="GO" id="GO:0050418">
    <property type="term" value="F:hydroxylamine reductase activity"/>
    <property type="evidence" value="ECO:0007669"/>
    <property type="project" value="UniProtKB-UniRule"/>
</dbReference>
<dbReference type="GO" id="GO:0046872">
    <property type="term" value="F:metal ion binding"/>
    <property type="evidence" value="ECO:0007669"/>
    <property type="project" value="UniProtKB-KW"/>
</dbReference>
<dbReference type="GO" id="GO:0004601">
    <property type="term" value="F:peroxidase activity"/>
    <property type="evidence" value="ECO:0007669"/>
    <property type="project" value="TreeGrafter"/>
</dbReference>
<dbReference type="GO" id="GO:0042542">
    <property type="term" value="P:response to hydrogen peroxide"/>
    <property type="evidence" value="ECO:0007669"/>
    <property type="project" value="TreeGrafter"/>
</dbReference>
<dbReference type="CDD" id="cd01914">
    <property type="entry name" value="HCP"/>
    <property type="match status" value="1"/>
</dbReference>
<dbReference type="FunFam" id="1.20.1270.20:FF:000001">
    <property type="entry name" value="Hydroxylamine reductase"/>
    <property type="match status" value="1"/>
</dbReference>
<dbReference type="FunFam" id="1.20.1270.20:FF:000002">
    <property type="entry name" value="Hydroxylamine reductase"/>
    <property type="match status" value="1"/>
</dbReference>
<dbReference type="FunFam" id="3.40.50.2030:FF:000001">
    <property type="entry name" value="Hydroxylamine reductase"/>
    <property type="match status" value="1"/>
</dbReference>
<dbReference type="FunFam" id="3.40.50.2030:FF:000002">
    <property type="entry name" value="Hydroxylamine reductase"/>
    <property type="match status" value="1"/>
</dbReference>
<dbReference type="Gene3D" id="1.20.1270.20">
    <property type="match status" value="2"/>
</dbReference>
<dbReference type="Gene3D" id="3.40.50.2030">
    <property type="match status" value="2"/>
</dbReference>
<dbReference type="HAMAP" id="MF_00069">
    <property type="entry name" value="Hydroxylam_reduct"/>
    <property type="match status" value="1"/>
</dbReference>
<dbReference type="InterPro" id="IPR004137">
    <property type="entry name" value="HCP/CODH"/>
</dbReference>
<dbReference type="InterPro" id="IPR010048">
    <property type="entry name" value="Hydroxylam_reduct"/>
</dbReference>
<dbReference type="InterPro" id="IPR016099">
    <property type="entry name" value="Prismane-like_a/b-sand"/>
</dbReference>
<dbReference type="InterPro" id="IPR011254">
    <property type="entry name" value="Prismane-like_sf"/>
</dbReference>
<dbReference type="InterPro" id="IPR016100">
    <property type="entry name" value="Prismane_a-bundle"/>
</dbReference>
<dbReference type="NCBIfam" id="TIGR01703">
    <property type="entry name" value="hybrid_clust"/>
    <property type="match status" value="1"/>
</dbReference>
<dbReference type="NCBIfam" id="NF003658">
    <property type="entry name" value="PRK05290.1"/>
    <property type="match status" value="1"/>
</dbReference>
<dbReference type="PANTHER" id="PTHR30109">
    <property type="entry name" value="HYDROXYLAMINE REDUCTASE"/>
    <property type="match status" value="1"/>
</dbReference>
<dbReference type="PANTHER" id="PTHR30109:SF0">
    <property type="entry name" value="HYDROXYLAMINE REDUCTASE"/>
    <property type="match status" value="1"/>
</dbReference>
<dbReference type="Pfam" id="PF03063">
    <property type="entry name" value="Prismane"/>
    <property type="match status" value="1"/>
</dbReference>
<dbReference type="PIRSF" id="PIRSF000076">
    <property type="entry name" value="HCP"/>
    <property type="match status" value="1"/>
</dbReference>
<dbReference type="SUPFAM" id="SSF56821">
    <property type="entry name" value="Prismane protein-like"/>
    <property type="match status" value="1"/>
</dbReference>
<organism>
    <name type="scientific">Tolumonas auensis (strain DSM 9187 / NBRC 110442 / TA 4)</name>
    <dbReference type="NCBI Taxonomy" id="595494"/>
    <lineage>
        <taxon>Bacteria</taxon>
        <taxon>Pseudomonadati</taxon>
        <taxon>Pseudomonadota</taxon>
        <taxon>Gammaproteobacteria</taxon>
        <taxon>Aeromonadales</taxon>
        <taxon>Aeromonadaceae</taxon>
        <taxon>Tolumonas</taxon>
    </lineage>
</organism>
<sequence>MFCIQCEQTISTPTTKGCSYTMGMCGKTAEVSDLQDVLIYLLQGVSDYAVKARSVGIVDQAIDAYVCQALFSTLTNVNFDAARIIAFINEAQQNRDSLKSRYEAACLLAGKAPEAATGPAALILTADKAELLAWAPNAAVNRNYKEIGEDILGLRLLCLYGLKGAAAYMEHARVLGQQDDEVGAEFHQIMMFLGTEPTEMQPLIDCAMQIGQMNFKVMALLDKGETETFGHPEPTRVNMKPVAGKAILVSGHDLHDLEKILQQTEGKGINVFTNGEMLPAHAYPAFKKYPHLVGNYGSAWQNQQKEFAAFPGAVVMTSNCIINPNVGKYADRIYTRSIVGWPGVTHIEGDDFSTVIEKALSLDGFPYDEIPHYTMTGFARNALMAAAPAVIDQVKAGNIKHFFLIGGCDGDKQERGYYTEMAKAVPQDSLILTLACGKFKFNDLEFGDINGIPRLLDVGQCNDAYSAIQLALALAEAFECGVNDLPLSLVLSWFEQKAIVILLTLLSLGVKGIRVGPSVPGFLTPNLLNFLNETFDLRPITTVEQDLKDILAA</sequence>
<reference key="1">
    <citation type="submission" date="2009-05" db="EMBL/GenBank/DDBJ databases">
        <title>Complete sequence of Tolumonas auensis DSM 9187.</title>
        <authorList>
            <consortium name="US DOE Joint Genome Institute"/>
            <person name="Lucas S."/>
            <person name="Copeland A."/>
            <person name="Lapidus A."/>
            <person name="Glavina del Rio T."/>
            <person name="Tice H."/>
            <person name="Bruce D."/>
            <person name="Goodwin L."/>
            <person name="Pitluck S."/>
            <person name="Chertkov O."/>
            <person name="Brettin T."/>
            <person name="Detter J.C."/>
            <person name="Han C."/>
            <person name="Larimer F."/>
            <person name="Land M."/>
            <person name="Hauser L."/>
            <person name="Kyrpides N."/>
            <person name="Mikhailova N."/>
            <person name="Spring S."/>
            <person name="Beller H."/>
        </authorList>
    </citation>
    <scope>NUCLEOTIDE SEQUENCE [LARGE SCALE GENOMIC DNA]</scope>
    <source>
        <strain>DSM 9187 / NBRC 110442 / TA 4</strain>
    </source>
</reference>
<comment type="function">
    <text evidence="1">Catalyzes the reduction of hydroxylamine to form NH(3) and H(2)O.</text>
</comment>
<comment type="catalytic activity">
    <reaction evidence="1">
        <text>A + NH4(+) + H2O = hydroxylamine + AH2 + H(+)</text>
        <dbReference type="Rhea" id="RHEA:22052"/>
        <dbReference type="ChEBI" id="CHEBI:13193"/>
        <dbReference type="ChEBI" id="CHEBI:15377"/>
        <dbReference type="ChEBI" id="CHEBI:15378"/>
        <dbReference type="ChEBI" id="CHEBI:15429"/>
        <dbReference type="ChEBI" id="CHEBI:17499"/>
        <dbReference type="ChEBI" id="CHEBI:28938"/>
        <dbReference type="EC" id="1.7.99.1"/>
    </reaction>
</comment>
<comment type="cofactor">
    <cofactor evidence="1">
        <name>[2Fe-2S] cluster</name>
        <dbReference type="ChEBI" id="CHEBI:190135"/>
    </cofactor>
    <text evidence="1">Binds 1 [2Fe-2S] cluster.</text>
</comment>
<comment type="cofactor">
    <cofactor evidence="1">
        <name>hybrid [4Fe-2O-2S] cluster</name>
        <dbReference type="ChEBI" id="CHEBI:60519"/>
    </cofactor>
    <text evidence="1">Binds 1 hybrid [4Fe-2O-2S] cluster.</text>
</comment>
<comment type="subcellular location">
    <subcellularLocation>
        <location evidence="1">Cytoplasm</location>
    </subcellularLocation>
</comment>
<comment type="similarity">
    <text evidence="1">Belongs to the HCP family.</text>
</comment>